<sequence length="358" mass="39414">MSTAIRSGRQSNWEAFCQWVTDTNNRIYVGWFGVLMIPCLLAATICFTIAFIAAPPVDIDGIREPVAGSLIYGNNIISGAVVPSSNAIGLHFYPIWEAASLDEWLYNGGPYQLVCFHFLIGISAYMGRQWELSYRLGMRPWICVAYSAPLSAAMAVFLVYPFGQGSFSDGMPLGISGTFNFMLVFQAEHNILMHPFHMLGVAGVFGGSLFSAMHGSLVTSSLVRETTETESQNYGYKFGQEEETYNIVAAHGYFGRLIFQYASFNNSRSLHFFLGAWPVVGIWFTSMGVSTMAFNLNGFNFNQSILDGQGRVVNTWADMVNRAGLGMEVMHERNAHNFPLDLATVESTPVALQAPAIG</sequence>
<accession>Q7U669</accession>
<gene>
    <name evidence="1 2" type="primary">psbA2</name>
    <name type="synonym">psbA1</name>
    <name type="ordered locus">SYNW1470</name>
</gene>
<reference key="1">
    <citation type="journal article" date="2003" name="Nature">
        <title>The genome of a motile marine Synechococcus.</title>
        <authorList>
            <person name="Palenik B."/>
            <person name="Brahamsha B."/>
            <person name="Larimer F.W."/>
            <person name="Land M.L."/>
            <person name="Hauser L."/>
            <person name="Chain P."/>
            <person name="Lamerdin J.E."/>
            <person name="Regala W."/>
            <person name="Allen E.E."/>
            <person name="McCarren J."/>
            <person name="Paulsen I.T."/>
            <person name="Dufresne A."/>
            <person name="Partensky F."/>
            <person name="Webb E.A."/>
            <person name="Waterbury J."/>
        </authorList>
    </citation>
    <scope>NUCLEOTIDE SEQUENCE [LARGE SCALE GENOMIC DNA]</scope>
    <source>
        <strain>WH8102</strain>
    </source>
</reference>
<keyword id="KW-0106">Calcium</keyword>
<keyword id="KW-0148">Chlorophyll</keyword>
<keyword id="KW-0157">Chromophore</keyword>
<keyword id="KW-0249">Electron transport</keyword>
<keyword id="KW-0359">Herbicide resistance</keyword>
<keyword id="KW-0408">Iron</keyword>
<keyword id="KW-0460">Magnesium</keyword>
<keyword id="KW-0464">Manganese</keyword>
<keyword id="KW-0472">Membrane</keyword>
<keyword id="KW-0479">Metal-binding</keyword>
<keyword id="KW-0560">Oxidoreductase</keyword>
<keyword id="KW-0602">Photosynthesis</keyword>
<keyword id="KW-0604">Photosystem II</keyword>
<keyword id="KW-0793">Thylakoid</keyword>
<keyword id="KW-0812">Transmembrane</keyword>
<keyword id="KW-1133">Transmembrane helix</keyword>
<keyword id="KW-0813">Transport</keyword>
<name>PSBA2_PARMW</name>
<comment type="function">
    <text evidence="1">Photosystem II (PSII) is a light-driven water:plastoquinone oxidoreductase that uses light energy to abstract electrons from H(2)O, generating O(2) and a proton gradient subsequently used for ATP formation. It consists of a core antenna complex that captures photons, and an electron transfer chain that converts photonic excitation into a charge separation. The D1/D2 (PsbA/PsbD) reaction center heterodimer binds P680, the primary electron donor of PSII as well as several subsequent electron acceptors.</text>
</comment>
<comment type="catalytic activity">
    <reaction evidence="1">
        <text>2 a plastoquinone + 4 hnu + 2 H2O = 2 a plastoquinol + O2</text>
        <dbReference type="Rhea" id="RHEA:36359"/>
        <dbReference type="Rhea" id="RHEA-COMP:9561"/>
        <dbReference type="Rhea" id="RHEA-COMP:9562"/>
        <dbReference type="ChEBI" id="CHEBI:15377"/>
        <dbReference type="ChEBI" id="CHEBI:15379"/>
        <dbReference type="ChEBI" id="CHEBI:17757"/>
        <dbReference type="ChEBI" id="CHEBI:30212"/>
        <dbReference type="ChEBI" id="CHEBI:62192"/>
        <dbReference type="EC" id="1.10.3.9"/>
    </reaction>
</comment>
<comment type="cofactor">
    <text evidence="1">The D1/D2 heterodimer binds P680, chlorophylls that are the primary electron donor of PSII, and subsequent electron acceptors. It shares a non-heme iron and each subunit binds pheophytin, quinone, additional chlorophylls, carotenoids and lipids. D1 provides most of the ligands for the Mn4-Ca-O5 cluster of the oxygen-evolving complex (OEC). There is also a Cl(-1) ion associated with D1 and D2, which is required for oxygen evolution. The PSII complex binds additional chlorophylls, carotenoids and specific lipids.</text>
</comment>
<comment type="subunit">
    <text evidence="1">PSII is composed of 1 copy each of membrane proteins PsbA, PsbB, PsbC, PsbD, PsbE, PsbF, PsbH, PsbI, PsbJ, PsbK, PsbL, PsbM, PsbT, PsbX, PsbY, PsbZ, Psb30/Ycf12, peripheral proteins PsbO, CyanoQ (PsbQ), PsbU, PsbV and a large number of cofactors. It forms dimeric complexes.</text>
</comment>
<comment type="subcellular location">
    <subcellularLocation>
        <location evidence="1">Cellular thylakoid membrane</location>
        <topology evidence="1">Multi-pass membrane protein</topology>
    </subcellularLocation>
</comment>
<comment type="PTM">
    <text evidence="1">Tyr-160 forms a radical intermediate that is referred to as redox-active TyrZ, YZ or Y-Z.</text>
</comment>
<comment type="PTM">
    <text evidence="1">C-terminally processed by CtpA; processing is essential to allow assembly of the oxygen-evolving complex and thus photosynthetic growth.</text>
</comment>
<comment type="miscellaneous">
    <text evidence="1">Cyanobacteria usually contain more than 2 copies of the psbA gene.</text>
</comment>
<comment type="miscellaneous">
    <text evidence="1">2 of the reaction center chlorophylls (ChlD1 and ChlD2) are entirely coordinated by water.</text>
</comment>
<comment type="miscellaneous">
    <text evidence="1">Herbicides such as atrazine, BNT, diuron or ioxynil bind in the Q(B) binding site and block subsequent electron transfer.</text>
</comment>
<comment type="similarity">
    <text evidence="1">Belongs to the reaction center PufL/M/PsbA/D family.</text>
</comment>
<protein>
    <recommendedName>
        <fullName evidence="1">Photosystem II protein D1 2</fullName>
        <shortName evidence="1">PSII D1 protein 2</shortName>
        <ecNumber evidence="1">1.10.3.9</ecNumber>
    </recommendedName>
    <alternativeName>
        <fullName evidence="1">Photosystem II Q(B) protein 2</fullName>
    </alternativeName>
</protein>
<evidence type="ECO:0000255" key="1">
    <source>
        <dbReference type="HAMAP-Rule" id="MF_01379"/>
    </source>
</evidence>
<evidence type="ECO:0000305" key="2"/>
<feature type="chain" id="PRO_0000316422" description="Photosystem II protein D1 2" evidence="1">
    <location>
        <begin position="1"/>
        <end position="343"/>
    </location>
</feature>
<feature type="propeptide" id="PRO_0000316423" evidence="1">
    <location>
        <begin position="344"/>
        <end position="358"/>
    </location>
</feature>
<feature type="transmembrane region" description="Helical" evidence="1">
    <location>
        <begin position="28"/>
        <end position="45"/>
    </location>
</feature>
<feature type="transmembrane region" description="Helical" evidence="1">
    <location>
        <begin position="117"/>
        <end position="132"/>
    </location>
</feature>
<feature type="transmembrane region" description="Helical" evidence="1">
    <location>
        <begin position="141"/>
        <end position="155"/>
    </location>
</feature>
<feature type="transmembrane region" description="Helical" evidence="1">
    <location>
        <begin position="196"/>
        <end position="217"/>
    </location>
</feature>
<feature type="transmembrane region" description="Helical" evidence="1">
    <location>
        <begin position="273"/>
        <end position="287"/>
    </location>
</feature>
<feature type="binding site" description="axial binding residue" evidence="1">
    <location>
        <position position="117"/>
    </location>
    <ligand>
        <name>chlorophyll a</name>
        <dbReference type="ChEBI" id="CHEBI:58416"/>
        <label>ChlzD1</label>
    </ligand>
    <ligandPart>
        <name>Mg</name>
        <dbReference type="ChEBI" id="CHEBI:25107"/>
    </ligandPart>
</feature>
<feature type="binding site" evidence="1">
    <location>
        <position position="125"/>
    </location>
    <ligand>
        <name>pheophytin a</name>
        <dbReference type="ChEBI" id="CHEBI:136840"/>
        <label>D1</label>
    </ligand>
</feature>
<feature type="binding site" evidence="1">
    <location>
        <position position="169"/>
    </location>
    <ligand>
        <name>[CaMn4O5] cluster</name>
        <dbReference type="ChEBI" id="CHEBI:189552"/>
    </ligand>
</feature>
<feature type="binding site" evidence="1">
    <location>
        <position position="188"/>
    </location>
    <ligand>
        <name>[CaMn4O5] cluster</name>
        <dbReference type="ChEBI" id="CHEBI:189552"/>
    </ligand>
</feature>
<feature type="binding site" description="axial binding residue" evidence="1">
    <location>
        <position position="197"/>
    </location>
    <ligand>
        <name>chlorophyll a</name>
        <dbReference type="ChEBI" id="CHEBI:58416"/>
        <label>PD1</label>
    </ligand>
    <ligandPart>
        <name>Mg</name>
        <dbReference type="ChEBI" id="CHEBI:25107"/>
    </ligandPart>
</feature>
<feature type="binding site" evidence="1">
    <location>
        <position position="214"/>
    </location>
    <ligand>
        <name>a quinone</name>
        <dbReference type="ChEBI" id="CHEBI:132124"/>
        <label>B</label>
    </ligand>
</feature>
<feature type="binding site" evidence="1">
    <location>
        <position position="214"/>
    </location>
    <ligand>
        <name>Fe cation</name>
        <dbReference type="ChEBI" id="CHEBI:24875"/>
        <note>ligand shared with heterodimeric partner</note>
    </ligand>
</feature>
<feature type="binding site" evidence="1">
    <location>
        <begin position="263"/>
        <end position="264"/>
    </location>
    <ligand>
        <name>a quinone</name>
        <dbReference type="ChEBI" id="CHEBI:132124"/>
        <label>B</label>
    </ligand>
</feature>
<feature type="binding site" evidence="1">
    <location>
        <position position="271"/>
    </location>
    <ligand>
        <name>Fe cation</name>
        <dbReference type="ChEBI" id="CHEBI:24875"/>
        <note>ligand shared with heterodimeric partner</note>
    </ligand>
</feature>
<feature type="binding site" evidence="1">
    <location>
        <position position="331"/>
    </location>
    <ligand>
        <name>[CaMn4O5] cluster</name>
        <dbReference type="ChEBI" id="CHEBI:189552"/>
    </ligand>
</feature>
<feature type="binding site" evidence="1">
    <location>
        <position position="332"/>
    </location>
    <ligand>
        <name>[CaMn4O5] cluster</name>
        <dbReference type="ChEBI" id="CHEBI:189552"/>
    </ligand>
</feature>
<feature type="binding site" evidence="1">
    <location>
        <position position="341"/>
    </location>
    <ligand>
        <name>[CaMn4O5] cluster</name>
        <dbReference type="ChEBI" id="CHEBI:189552"/>
    </ligand>
</feature>
<feature type="binding site" evidence="1">
    <location>
        <position position="343"/>
    </location>
    <ligand>
        <name>[CaMn4O5] cluster</name>
        <dbReference type="ChEBI" id="CHEBI:189552"/>
    </ligand>
</feature>
<feature type="site" description="Tyrosine radical intermediate" evidence="1">
    <location>
        <position position="160"/>
    </location>
</feature>
<feature type="site" description="Stabilizes free radical intermediate" evidence="1">
    <location>
        <position position="189"/>
    </location>
</feature>
<feature type="site" description="Cleavage; by CtpA" evidence="1">
    <location>
        <begin position="343"/>
        <end position="344"/>
    </location>
</feature>
<organism>
    <name type="scientific">Parasynechococcus marenigrum (strain WH8102)</name>
    <dbReference type="NCBI Taxonomy" id="84588"/>
    <lineage>
        <taxon>Bacteria</taxon>
        <taxon>Bacillati</taxon>
        <taxon>Cyanobacteriota</taxon>
        <taxon>Cyanophyceae</taxon>
        <taxon>Synechococcales</taxon>
        <taxon>Prochlorococcaceae</taxon>
        <taxon>Parasynechococcus</taxon>
        <taxon>Parasynechococcus marenigrum</taxon>
    </lineage>
</organism>
<dbReference type="EC" id="1.10.3.9" evidence="1"/>
<dbReference type="EMBL" id="BX569693">
    <property type="protein sequence ID" value="CAE07985.1"/>
    <property type="molecule type" value="Genomic_DNA"/>
</dbReference>
<dbReference type="RefSeq" id="WP_011128334.1">
    <property type="nucleotide sequence ID" value="NC_005070.1"/>
</dbReference>
<dbReference type="SMR" id="Q7U669"/>
<dbReference type="STRING" id="84588.SYNW1470"/>
<dbReference type="KEGG" id="syw:SYNW1470"/>
<dbReference type="eggNOG" id="ENOG502Z87P">
    <property type="taxonomic scope" value="Bacteria"/>
</dbReference>
<dbReference type="HOGENOM" id="CLU_054206_1_0_3"/>
<dbReference type="BioCyc" id="MetaCyc:TX72_RS07385-MONOMER"/>
<dbReference type="Proteomes" id="UP000001422">
    <property type="component" value="Chromosome"/>
</dbReference>
<dbReference type="GO" id="GO:0009523">
    <property type="term" value="C:photosystem II"/>
    <property type="evidence" value="ECO:0007669"/>
    <property type="project" value="UniProtKB-KW"/>
</dbReference>
<dbReference type="GO" id="GO:0031676">
    <property type="term" value="C:plasma membrane-derived thylakoid membrane"/>
    <property type="evidence" value="ECO:0007669"/>
    <property type="project" value="UniProtKB-SubCell"/>
</dbReference>
<dbReference type="GO" id="GO:0016168">
    <property type="term" value="F:chlorophyll binding"/>
    <property type="evidence" value="ECO:0007669"/>
    <property type="project" value="UniProtKB-UniRule"/>
</dbReference>
<dbReference type="GO" id="GO:0045156">
    <property type="term" value="F:electron transporter, transferring electrons within the cyclic electron transport pathway of photosynthesis activity"/>
    <property type="evidence" value="ECO:0007669"/>
    <property type="project" value="InterPro"/>
</dbReference>
<dbReference type="GO" id="GO:0005506">
    <property type="term" value="F:iron ion binding"/>
    <property type="evidence" value="ECO:0007669"/>
    <property type="project" value="UniProtKB-UniRule"/>
</dbReference>
<dbReference type="GO" id="GO:0016682">
    <property type="term" value="F:oxidoreductase activity, acting on diphenols and related substances as donors, oxygen as acceptor"/>
    <property type="evidence" value="ECO:0007669"/>
    <property type="project" value="UniProtKB-UniRule"/>
</dbReference>
<dbReference type="GO" id="GO:0010242">
    <property type="term" value="F:oxygen evolving activity"/>
    <property type="evidence" value="ECO:0007669"/>
    <property type="project" value="UniProtKB-EC"/>
</dbReference>
<dbReference type="GO" id="GO:0009772">
    <property type="term" value="P:photosynthetic electron transport in photosystem II"/>
    <property type="evidence" value="ECO:0007669"/>
    <property type="project" value="InterPro"/>
</dbReference>
<dbReference type="GO" id="GO:0009635">
    <property type="term" value="P:response to herbicide"/>
    <property type="evidence" value="ECO:0007669"/>
    <property type="project" value="UniProtKB-KW"/>
</dbReference>
<dbReference type="CDD" id="cd09289">
    <property type="entry name" value="Photosystem-II_D1"/>
    <property type="match status" value="1"/>
</dbReference>
<dbReference type="FunFam" id="1.20.85.10:FF:000002">
    <property type="entry name" value="Photosystem II protein D1"/>
    <property type="match status" value="1"/>
</dbReference>
<dbReference type="Gene3D" id="1.20.85.10">
    <property type="entry name" value="Photosystem II protein D1-like"/>
    <property type="match status" value="1"/>
</dbReference>
<dbReference type="HAMAP" id="MF_01379">
    <property type="entry name" value="PSII_PsbA_D1"/>
    <property type="match status" value="1"/>
</dbReference>
<dbReference type="InterPro" id="IPR055266">
    <property type="entry name" value="D1/D2"/>
</dbReference>
<dbReference type="InterPro" id="IPR036854">
    <property type="entry name" value="Photo_II_D1/D2_sf"/>
</dbReference>
<dbReference type="InterPro" id="IPR000484">
    <property type="entry name" value="Photo_RC_L/M"/>
</dbReference>
<dbReference type="InterPro" id="IPR055265">
    <property type="entry name" value="Photo_RC_L/M_CS"/>
</dbReference>
<dbReference type="InterPro" id="IPR005867">
    <property type="entry name" value="PSII_D1"/>
</dbReference>
<dbReference type="NCBIfam" id="TIGR01151">
    <property type="entry name" value="psbA"/>
    <property type="match status" value="1"/>
</dbReference>
<dbReference type="PANTHER" id="PTHR33149:SF12">
    <property type="entry name" value="PHOTOSYSTEM II D2 PROTEIN"/>
    <property type="match status" value="1"/>
</dbReference>
<dbReference type="PANTHER" id="PTHR33149">
    <property type="entry name" value="PHOTOSYSTEM II PROTEIN D1"/>
    <property type="match status" value="1"/>
</dbReference>
<dbReference type="Pfam" id="PF00124">
    <property type="entry name" value="Photo_RC"/>
    <property type="match status" value="1"/>
</dbReference>
<dbReference type="PRINTS" id="PR00256">
    <property type="entry name" value="REACTNCENTRE"/>
</dbReference>
<dbReference type="SUPFAM" id="SSF81483">
    <property type="entry name" value="Bacterial photosystem II reaction centre, L and M subunits"/>
    <property type="match status" value="1"/>
</dbReference>
<dbReference type="PROSITE" id="PS00244">
    <property type="entry name" value="REACTION_CENTER"/>
    <property type="match status" value="1"/>
</dbReference>
<proteinExistence type="inferred from homology"/>